<organism>
    <name type="scientific">Arabidopsis thaliana</name>
    <name type="common">Mouse-ear cress</name>
    <dbReference type="NCBI Taxonomy" id="3702"/>
    <lineage>
        <taxon>Eukaryota</taxon>
        <taxon>Viridiplantae</taxon>
        <taxon>Streptophyta</taxon>
        <taxon>Embryophyta</taxon>
        <taxon>Tracheophyta</taxon>
        <taxon>Spermatophyta</taxon>
        <taxon>Magnoliopsida</taxon>
        <taxon>eudicotyledons</taxon>
        <taxon>Gunneridae</taxon>
        <taxon>Pentapetalae</taxon>
        <taxon>rosids</taxon>
        <taxon>malvids</taxon>
        <taxon>Brassicales</taxon>
        <taxon>Brassicaceae</taxon>
        <taxon>Camelineae</taxon>
        <taxon>Arabidopsis</taxon>
    </lineage>
</organism>
<gene>
    <name type="primary">PCMP-E42</name>
    <name type="synonym">PCMP-E60</name>
    <name type="ordered locus">At1g50270</name>
    <name type="ORF">F14I3.12</name>
</gene>
<protein>
    <recommendedName>
        <fullName>Pentatricopeptide repeat-containing protein At1g50270</fullName>
    </recommendedName>
</protein>
<proteinExistence type="evidence at transcript level"/>
<keyword id="KW-1185">Reference proteome</keyword>
<keyword id="KW-0677">Repeat</keyword>
<reference key="1">
    <citation type="journal article" date="2000" name="Nature">
        <title>Sequence and analysis of chromosome 1 of the plant Arabidopsis thaliana.</title>
        <authorList>
            <person name="Theologis A."/>
            <person name="Ecker J.R."/>
            <person name="Palm C.J."/>
            <person name="Federspiel N.A."/>
            <person name="Kaul S."/>
            <person name="White O."/>
            <person name="Alonso J."/>
            <person name="Altafi H."/>
            <person name="Araujo R."/>
            <person name="Bowman C.L."/>
            <person name="Brooks S.Y."/>
            <person name="Buehler E."/>
            <person name="Chan A."/>
            <person name="Chao Q."/>
            <person name="Chen H."/>
            <person name="Cheuk R.F."/>
            <person name="Chin C.W."/>
            <person name="Chung M.K."/>
            <person name="Conn L."/>
            <person name="Conway A.B."/>
            <person name="Conway A.R."/>
            <person name="Creasy T.H."/>
            <person name="Dewar K."/>
            <person name="Dunn P."/>
            <person name="Etgu P."/>
            <person name="Feldblyum T.V."/>
            <person name="Feng J.-D."/>
            <person name="Fong B."/>
            <person name="Fujii C.Y."/>
            <person name="Gill J.E."/>
            <person name="Goldsmith A.D."/>
            <person name="Haas B."/>
            <person name="Hansen N.F."/>
            <person name="Hughes B."/>
            <person name="Huizar L."/>
            <person name="Hunter J.L."/>
            <person name="Jenkins J."/>
            <person name="Johnson-Hopson C."/>
            <person name="Khan S."/>
            <person name="Khaykin E."/>
            <person name="Kim C.J."/>
            <person name="Koo H.L."/>
            <person name="Kremenetskaia I."/>
            <person name="Kurtz D.B."/>
            <person name="Kwan A."/>
            <person name="Lam B."/>
            <person name="Langin-Hooper S."/>
            <person name="Lee A."/>
            <person name="Lee J.M."/>
            <person name="Lenz C.A."/>
            <person name="Li J.H."/>
            <person name="Li Y.-P."/>
            <person name="Lin X."/>
            <person name="Liu S.X."/>
            <person name="Liu Z.A."/>
            <person name="Luros J.S."/>
            <person name="Maiti R."/>
            <person name="Marziali A."/>
            <person name="Militscher J."/>
            <person name="Miranda M."/>
            <person name="Nguyen M."/>
            <person name="Nierman W.C."/>
            <person name="Osborne B.I."/>
            <person name="Pai G."/>
            <person name="Peterson J."/>
            <person name="Pham P.K."/>
            <person name="Rizzo M."/>
            <person name="Rooney T."/>
            <person name="Rowley D."/>
            <person name="Sakano H."/>
            <person name="Salzberg S.L."/>
            <person name="Schwartz J.R."/>
            <person name="Shinn P."/>
            <person name="Southwick A.M."/>
            <person name="Sun H."/>
            <person name="Tallon L.J."/>
            <person name="Tambunga G."/>
            <person name="Toriumi M.J."/>
            <person name="Town C.D."/>
            <person name="Utterback T."/>
            <person name="Van Aken S."/>
            <person name="Vaysberg M."/>
            <person name="Vysotskaia V.S."/>
            <person name="Walker M."/>
            <person name="Wu D."/>
            <person name="Yu G."/>
            <person name="Fraser C.M."/>
            <person name="Venter J.C."/>
            <person name="Davis R.W."/>
        </authorList>
    </citation>
    <scope>NUCLEOTIDE SEQUENCE [LARGE SCALE GENOMIC DNA]</scope>
    <source>
        <strain>cv. Columbia</strain>
    </source>
</reference>
<reference key="2">
    <citation type="journal article" date="2017" name="Plant J.">
        <title>Araport11: a complete reannotation of the Arabidopsis thaliana reference genome.</title>
        <authorList>
            <person name="Cheng C.Y."/>
            <person name="Krishnakumar V."/>
            <person name="Chan A.P."/>
            <person name="Thibaud-Nissen F."/>
            <person name="Schobel S."/>
            <person name="Town C.D."/>
        </authorList>
    </citation>
    <scope>GENOME REANNOTATION</scope>
    <source>
        <strain>cv. Columbia</strain>
    </source>
</reference>
<reference key="3">
    <citation type="submission" date="2006-07" db="EMBL/GenBank/DDBJ databases">
        <title>Large-scale analysis of RIKEN Arabidopsis full-length (RAFL) cDNAs.</title>
        <authorList>
            <person name="Totoki Y."/>
            <person name="Seki M."/>
            <person name="Ishida J."/>
            <person name="Nakajima M."/>
            <person name="Enju A."/>
            <person name="Kamiya A."/>
            <person name="Narusaka M."/>
            <person name="Shin-i T."/>
            <person name="Nakagawa M."/>
            <person name="Sakamoto N."/>
            <person name="Oishi K."/>
            <person name="Kohara Y."/>
            <person name="Kobayashi M."/>
            <person name="Toyoda A."/>
            <person name="Sakaki Y."/>
            <person name="Sakurai T."/>
            <person name="Iida K."/>
            <person name="Akiyama K."/>
            <person name="Satou M."/>
            <person name="Toyoda T."/>
            <person name="Konagaya A."/>
            <person name="Carninci P."/>
            <person name="Kawai J."/>
            <person name="Hayashizaki Y."/>
            <person name="Shinozaki K."/>
        </authorList>
    </citation>
    <scope>NUCLEOTIDE SEQUENCE [LARGE SCALE MRNA]</scope>
    <source>
        <strain>cv. Columbia</strain>
    </source>
</reference>
<reference key="4">
    <citation type="journal article" date="2000" name="Plant Mol. Biol.">
        <title>In Arabidopsis thaliana, 1% of the genome codes for a novel protein family unique to plants.</title>
        <authorList>
            <person name="Aubourg S."/>
            <person name="Boudet N."/>
            <person name="Kreis M."/>
            <person name="Lecharny A."/>
        </authorList>
    </citation>
    <scope>GENE FAMILY</scope>
</reference>
<reference key="5">
    <citation type="journal article" date="2004" name="Plant Cell">
        <title>Genome-wide analysis of Arabidopsis pentatricopeptide repeat proteins reveals their essential role in organelle biogenesis.</title>
        <authorList>
            <person name="Lurin C."/>
            <person name="Andres C."/>
            <person name="Aubourg S."/>
            <person name="Bellaoui M."/>
            <person name="Bitton F."/>
            <person name="Bruyere C."/>
            <person name="Caboche M."/>
            <person name="Debast C."/>
            <person name="Gualberto J."/>
            <person name="Hoffmann B."/>
            <person name="Lecharny A."/>
            <person name="Le Ret M."/>
            <person name="Martin-Magniette M.-L."/>
            <person name="Mireau H."/>
            <person name="Peeters N."/>
            <person name="Renou J.-P."/>
            <person name="Szurek B."/>
            <person name="Taconnat L."/>
            <person name="Small I."/>
        </authorList>
    </citation>
    <scope>GENE FAMILY</scope>
</reference>
<sequence>MIELKTLLDLPLHFLHLKQIHCLLLTSPIFYTRRDLFLSRLLRRCCTAATQFRYARRLLCQLQTLSIQLWDSLIGHFSGGITLNRRLSFLAYRHMRRNGVIPSRHTFPPLLKAVFKLRDSNPFQFHAHIVKFGLDSDPFVRNSLISGYSSSGLFDFASRLFDGAEDKDVVTWTAMIDGFVRNGSASEAMVYFVEMKKTGVAANEMTVVSVLKAAGKVEDVRFGRSVHGLYLETGRVKCDVFIGSSLVDMYGKCSCYDDAQKVFDEMPSRNVVTWTALIAGYVQSRCFDKGMLVFEEMLKSDVAPNEKTLSSVLSACAHVGALHRGRRVHCYMIKNSIEINTTAGTTLIDLYVKCGCLEEAILVFERLHEKNVYTWTAMINGFAAHGYARDAFDLFYTMLSSHVSPNEVTFMAVLSACAHGGLVEEGRRLFLSMKGRFNMEPKADHYACMVDLFGRKGLLEEAKALIERMPMEPTNVVWGALFGSCLLHKDYELGKYAASRVIKLQPSHSGRYTLLANLYSESQNWDEVARVRKQMKDQQVVKSPGFSWIEVKGKLCEFIAFDDKKPLESDDLYKTLDTVGVQMRLPDELEDVTAES</sequence>
<evidence type="ECO:0000305" key="1"/>
<name>PPR75_ARATH</name>
<dbReference type="EMBL" id="AC007980">
    <property type="protein sequence ID" value="AAD50041.1"/>
    <property type="molecule type" value="Genomic_DNA"/>
</dbReference>
<dbReference type="EMBL" id="CP002684">
    <property type="protein sequence ID" value="AEE32531.1"/>
    <property type="molecule type" value="Genomic_DNA"/>
</dbReference>
<dbReference type="EMBL" id="AK229256">
    <property type="protein sequence ID" value="BAF01120.1"/>
    <property type="molecule type" value="mRNA"/>
</dbReference>
<dbReference type="PIR" id="A96539">
    <property type="entry name" value="A96539"/>
</dbReference>
<dbReference type="RefSeq" id="NP_175445.1">
    <property type="nucleotide sequence ID" value="NM_103911.2"/>
</dbReference>
<dbReference type="SMR" id="Q9SX45"/>
<dbReference type="STRING" id="3702.Q9SX45"/>
<dbReference type="PaxDb" id="3702-AT1G50270.1"/>
<dbReference type="EnsemblPlants" id="AT1G50270.1">
    <property type="protein sequence ID" value="AT1G50270.1"/>
    <property type="gene ID" value="AT1G50270"/>
</dbReference>
<dbReference type="GeneID" id="841449"/>
<dbReference type="Gramene" id="AT1G50270.1">
    <property type="protein sequence ID" value="AT1G50270.1"/>
    <property type="gene ID" value="AT1G50270"/>
</dbReference>
<dbReference type="KEGG" id="ath:AT1G50270"/>
<dbReference type="Araport" id="AT1G50270"/>
<dbReference type="TAIR" id="AT1G50270"/>
<dbReference type="eggNOG" id="KOG4197">
    <property type="taxonomic scope" value="Eukaryota"/>
</dbReference>
<dbReference type="HOGENOM" id="CLU_002706_0_1_1"/>
<dbReference type="InParanoid" id="Q9SX45"/>
<dbReference type="OMA" id="KDVYPWT"/>
<dbReference type="PhylomeDB" id="Q9SX45"/>
<dbReference type="PRO" id="PR:Q9SX45"/>
<dbReference type="Proteomes" id="UP000006548">
    <property type="component" value="Chromosome 1"/>
</dbReference>
<dbReference type="ExpressionAtlas" id="Q9SX45">
    <property type="expression patterns" value="baseline and differential"/>
</dbReference>
<dbReference type="GO" id="GO:0003723">
    <property type="term" value="F:RNA binding"/>
    <property type="evidence" value="ECO:0007669"/>
    <property type="project" value="InterPro"/>
</dbReference>
<dbReference type="GO" id="GO:0009451">
    <property type="term" value="P:RNA modification"/>
    <property type="evidence" value="ECO:0007669"/>
    <property type="project" value="InterPro"/>
</dbReference>
<dbReference type="FunFam" id="1.25.40.10:FF:000351">
    <property type="entry name" value="Pentatricopeptide repeat-containing protein"/>
    <property type="match status" value="1"/>
</dbReference>
<dbReference type="FunFam" id="1.25.40.10:FF:000517">
    <property type="entry name" value="Pentatricopeptide repeat-containing protein At1g50270"/>
    <property type="match status" value="1"/>
</dbReference>
<dbReference type="FunFam" id="1.25.40.10:FF:000184">
    <property type="entry name" value="Pentatricopeptide repeat-containing protein, chloroplastic"/>
    <property type="match status" value="1"/>
</dbReference>
<dbReference type="Gene3D" id="1.25.40.10">
    <property type="entry name" value="Tetratricopeptide repeat domain"/>
    <property type="match status" value="3"/>
</dbReference>
<dbReference type="InterPro" id="IPR046848">
    <property type="entry name" value="E_motif"/>
</dbReference>
<dbReference type="InterPro" id="IPR002885">
    <property type="entry name" value="Pentatricopeptide_rpt"/>
</dbReference>
<dbReference type="InterPro" id="IPR046960">
    <property type="entry name" value="PPR_At4g14850-like_plant"/>
</dbReference>
<dbReference type="InterPro" id="IPR011990">
    <property type="entry name" value="TPR-like_helical_dom_sf"/>
</dbReference>
<dbReference type="NCBIfam" id="TIGR00756">
    <property type="entry name" value="PPR"/>
    <property type="match status" value="4"/>
</dbReference>
<dbReference type="PANTHER" id="PTHR47926">
    <property type="entry name" value="PENTATRICOPEPTIDE REPEAT-CONTAINING PROTEIN"/>
    <property type="match status" value="1"/>
</dbReference>
<dbReference type="PANTHER" id="PTHR47926:SF463">
    <property type="entry name" value="PENTATRICOPEPTIDE REPEAT-CONTAINING PROTEIN"/>
    <property type="match status" value="1"/>
</dbReference>
<dbReference type="Pfam" id="PF20431">
    <property type="entry name" value="E_motif"/>
    <property type="match status" value="1"/>
</dbReference>
<dbReference type="Pfam" id="PF01535">
    <property type="entry name" value="PPR"/>
    <property type="match status" value="2"/>
</dbReference>
<dbReference type="Pfam" id="PF13041">
    <property type="entry name" value="PPR_2"/>
    <property type="match status" value="3"/>
</dbReference>
<dbReference type="SUPFAM" id="SSF48452">
    <property type="entry name" value="TPR-like"/>
    <property type="match status" value="1"/>
</dbReference>
<dbReference type="PROSITE" id="PS51375">
    <property type="entry name" value="PPR"/>
    <property type="match status" value="11"/>
</dbReference>
<comment type="similarity">
    <text evidence="1">Belongs to the PPR family. PCMP-E subfamily.</text>
</comment>
<comment type="online information" name="Pentatricopeptide repeat proteins">
    <link uri="https://ppr.plantenergy.uwa.edu.au"/>
</comment>
<feature type="chain" id="PRO_0000342816" description="Pentatricopeptide repeat-containing protein At1g50270">
    <location>
        <begin position="1"/>
        <end position="596"/>
    </location>
</feature>
<feature type="repeat" description="PPR 1">
    <location>
        <begin position="66"/>
        <end position="102"/>
    </location>
</feature>
<feature type="repeat" description="PPR 2">
    <location>
        <begin position="103"/>
        <end position="136"/>
    </location>
</feature>
<feature type="repeat" description="PPR 3">
    <location>
        <begin position="137"/>
        <end position="167"/>
    </location>
</feature>
<feature type="repeat" description="PPR 4">
    <location>
        <begin position="168"/>
        <end position="202"/>
    </location>
</feature>
<feature type="repeat" description="PPR 5">
    <location>
        <begin position="203"/>
        <end position="237"/>
    </location>
</feature>
<feature type="repeat" description="PPR 6">
    <location>
        <begin position="239"/>
        <end position="269"/>
    </location>
</feature>
<feature type="repeat" description="PPR 7">
    <location>
        <begin position="270"/>
        <end position="304"/>
    </location>
</feature>
<feature type="repeat" description="PPR 8">
    <location>
        <begin position="305"/>
        <end position="339"/>
    </location>
</feature>
<feature type="repeat" description="PPR 9">
    <location>
        <begin position="340"/>
        <end position="370"/>
    </location>
</feature>
<feature type="repeat" description="PPR 10">
    <location>
        <begin position="371"/>
        <end position="405"/>
    </location>
</feature>
<feature type="repeat" description="PPR 11">
    <location>
        <begin position="406"/>
        <end position="436"/>
    </location>
</feature>
<feature type="repeat" description="PPR 12">
    <location>
        <begin position="442"/>
        <end position="472"/>
    </location>
</feature>
<feature type="region of interest" description="Type E motif">
    <location>
        <begin position="477"/>
        <end position="552"/>
    </location>
</feature>
<feature type="region of interest" description="Type E(+) motif">
    <location>
        <begin position="553"/>
        <end position="584"/>
    </location>
</feature>
<feature type="sequence conflict" description="In Ref. 3; BAF01120." evidence="1" ref="3">
    <original>P</original>
    <variation>L</variation>
    <location>
        <position position="441"/>
    </location>
</feature>
<accession>Q9SX45</accession>
<accession>Q0WP29</accession>